<reference key="1">
    <citation type="journal article" date="2003" name="Nucleic Acids Res.">
        <title>Genome sequence of Chlamydophila caviae (Chlamydia psittaci GPIC): examining the role of niche-specific genes in the evolution of the Chlamydiaceae.</title>
        <authorList>
            <person name="Read T.D."/>
            <person name="Myers G.S.A."/>
            <person name="Brunham R.C."/>
            <person name="Nelson W.C."/>
            <person name="Paulsen I.T."/>
            <person name="Heidelberg J.F."/>
            <person name="Holtzapple E.K."/>
            <person name="Khouri H.M."/>
            <person name="Federova N.B."/>
            <person name="Carty H.A."/>
            <person name="Umayam L.A."/>
            <person name="Haft D.H."/>
            <person name="Peterson J.D."/>
            <person name="Beanan M.J."/>
            <person name="White O."/>
            <person name="Salzberg S.L."/>
            <person name="Hsia R.-C."/>
            <person name="McClarty G."/>
            <person name="Rank R.G."/>
            <person name="Bavoil P.M."/>
            <person name="Fraser C.M."/>
        </authorList>
    </citation>
    <scope>NUCLEOTIDE SEQUENCE [LARGE SCALE GENOMIC DNA]</scope>
    <source>
        <strain>ATCC VR-813 / DSM 19441 / 03DC25 / GPIC</strain>
    </source>
</reference>
<name>G6PI_CHLCV</name>
<evidence type="ECO:0000255" key="1">
    <source>
        <dbReference type="HAMAP-Rule" id="MF_00473"/>
    </source>
</evidence>
<organism>
    <name type="scientific">Chlamydia caviae (strain ATCC VR-813 / DSM 19441 / 03DC25 / GPIC)</name>
    <name type="common">Chlamydophila caviae</name>
    <dbReference type="NCBI Taxonomy" id="227941"/>
    <lineage>
        <taxon>Bacteria</taxon>
        <taxon>Pseudomonadati</taxon>
        <taxon>Chlamydiota</taxon>
        <taxon>Chlamydiia</taxon>
        <taxon>Chlamydiales</taxon>
        <taxon>Chlamydiaceae</taxon>
        <taxon>Chlamydia/Chlamydophila group</taxon>
        <taxon>Chlamydia</taxon>
    </lineage>
</organism>
<accession>Q822E7</accession>
<comment type="function">
    <text evidence="1">Catalyzes the reversible isomerization of glucose-6-phosphate to fructose-6-phosphate.</text>
</comment>
<comment type="catalytic activity">
    <reaction evidence="1">
        <text>alpha-D-glucose 6-phosphate = beta-D-fructose 6-phosphate</text>
        <dbReference type="Rhea" id="RHEA:11816"/>
        <dbReference type="ChEBI" id="CHEBI:57634"/>
        <dbReference type="ChEBI" id="CHEBI:58225"/>
        <dbReference type="EC" id="5.3.1.9"/>
    </reaction>
</comment>
<comment type="pathway">
    <text evidence="1">Carbohydrate biosynthesis; gluconeogenesis.</text>
</comment>
<comment type="pathway">
    <text evidence="1">Carbohydrate degradation; glycolysis; D-glyceraldehyde 3-phosphate and glycerone phosphate from D-glucose: step 2/4.</text>
</comment>
<comment type="subcellular location">
    <subcellularLocation>
        <location evidence="1">Cytoplasm</location>
    </subcellularLocation>
</comment>
<comment type="similarity">
    <text evidence="1">Belongs to the GPI family.</text>
</comment>
<gene>
    <name evidence="1" type="primary">pgi</name>
    <name type="ordered locus">CCA_00736</name>
</gene>
<protein>
    <recommendedName>
        <fullName evidence="1">Glucose-6-phosphate isomerase</fullName>
        <shortName evidence="1">GPI</shortName>
        <ecNumber evidence="1">5.3.1.9</ecNumber>
    </recommendedName>
    <alternativeName>
        <fullName evidence="1">Phosphoglucose isomerase</fullName>
        <shortName evidence="1">PGI</shortName>
    </alternativeName>
    <alternativeName>
        <fullName evidence="1">Phosphohexose isomerase</fullName>
        <shortName evidence="1">PHI</shortName>
    </alternativeName>
</protein>
<feature type="chain" id="PRO_0000180622" description="Glucose-6-phosphate isomerase">
    <location>
        <begin position="1"/>
        <end position="527"/>
    </location>
</feature>
<feature type="active site" description="Proton donor" evidence="1">
    <location>
        <position position="347"/>
    </location>
</feature>
<feature type="active site" evidence="1">
    <location>
        <position position="378"/>
    </location>
</feature>
<feature type="active site" evidence="1">
    <location>
        <position position="493"/>
    </location>
</feature>
<keyword id="KW-0963">Cytoplasm</keyword>
<keyword id="KW-0312">Gluconeogenesis</keyword>
<keyword id="KW-0324">Glycolysis</keyword>
<keyword id="KW-0413">Isomerase</keyword>
<sequence length="527" mass="57881">MNKKGFLDSSSTKILQDLAVAPIDLTAPGVISKERIERFSLSVEGFTLSYATERVDEGILSALEDLASERGLIESMQAMQNGEVVNYIENFPSESRPALHTATRAWVKESPLQGNAEDISLRSKIEAQRLKDFLNRYRDVFTTIVQIGIGGSELGPKALHWALKGCCPSDKKVYFVSNVDPDNAAEVLQEIDCAKTLVVTVSKSGTTLETAVNEELLADHFLKQGLHFQDHFIAVTCEGSPMDDTSKYLEVFHIWDSIGGRYSSTSMVGGVVLGFAYGFDVFLQLLEGAASMDLAALEPRMSENLPLLSAMLGIWNRNFLRYPTSAVVPYATGLEYFPAHLQQCGMESNGKSVAQTGEVIGFATSPILWGEVGTNSQHSFFQCLHQGSDIVPIEFIGFQENQRGKDIVIAGSSSSQKLFANMVAQSIALAKGRENTNPNKNFRGNRPSSLLVSERLTPYTMGALLAFYEHKIVFQGFCWGINSFDQEGVTLGKDLANQVLQVMQGQEKEGALLEAEALLRLFNNIKK</sequence>
<dbReference type="EC" id="5.3.1.9" evidence="1"/>
<dbReference type="EMBL" id="AE015925">
    <property type="protein sequence ID" value="AAP05477.1"/>
    <property type="molecule type" value="Genomic_DNA"/>
</dbReference>
<dbReference type="RefSeq" id="WP_011006691.1">
    <property type="nucleotide sequence ID" value="NC_003361.3"/>
</dbReference>
<dbReference type="SMR" id="Q822E7"/>
<dbReference type="STRING" id="227941.CCA_00736"/>
<dbReference type="KEGG" id="cca:CCA_00736"/>
<dbReference type="eggNOG" id="COG0166">
    <property type="taxonomic scope" value="Bacteria"/>
</dbReference>
<dbReference type="HOGENOM" id="CLU_017947_3_1_0"/>
<dbReference type="OrthoDB" id="140919at2"/>
<dbReference type="UniPathway" id="UPA00109">
    <property type="reaction ID" value="UER00181"/>
</dbReference>
<dbReference type="UniPathway" id="UPA00138"/>
<dbReference type="Proteomes" id="UP000002193">
    <property type="component" value="Chromosome"/>
</dbReference>
<dbReference type="GO" id="GO:0005829">
    <property type="term" value="C:cytosol"/>
    <property type="evidence" value="ECO:0007669"/>
    <property type="project" value="TreeGrafter"/>
</dbReference>
<dbReference type="GO" id="GO:0097367">
    <property type="term" value="F:carbohydrate derivative binding"/>
    <property type="evidence" value="ECO:0007669"/>
    <property type="project" value="InterPro"/>
</dbReference>
<dbReference type="GO" id="GO:0004347">
    <property type="term" value="F:glucose-6-phosphate isomerase activity"/>
    <property type="evidence" value="ECO:0007669"/>
    <property type="project" value="UniProtKB-UniRule"/>
</dbReference>
<dbReference type="GO" id="GO:0048029">
    <property type="term" value="F:monosaccharide binding"/>
    <property type="evidence" value="ECO:0007669"/>
    <property type="project" value="TreeGrafter"/>
</dbReference>
<dbReference type="GO" id="GO:0006094">
    <property type="term" value="P:gluconeogenesis"/>
    <property type="evidence" value="ECO:0007669"/>
    <property type="project" value="UniProtKB-UniRule"/>
</dbReference>
<dbReference type="GO" id="GO:0051156">
    <property type="term" value="P:glucose 6-phosphate metabolic process"/>
    <property type="evidence" value="ECO:0007669"/>
    <property type="project" value="TreeGrafter"/>
</dbReference>
<dbReference type="GO" id="GO:0006096">
    <property type="term" value="P:glycolytic process"/>
    <property type="evidence" value="ECO:0007669"/>
    <property type="project" value="UniProtKB-UniRule"/>
</dbReference>
<dbReference type="CDD" id="cd05015">
    <property type="entry name" value="SIS_PGI_1"/>
    <property type="match status" value="1"/>
</dbReference>
<dbReference type="CDD" id="cd05016">
    <property type="entry name" value="SIS_PGI_2"/>
    <property type="match status" value="1"/>
</dbReference>
<dbReference type="Gene3D" id="1.10.1390.10">
    <property type="match status" value="1"/>
</dbReference>
<dbReference type="Gene3D" id="3.40.50.10490">
    <property type="entry name" value="Glucose-6-phosphate isomerase like protein, domain 1"/>
    <property type="match status" value="2"/>
</dbReference>
<dbReference type="HAMAP" id="MF_00473">
    <property type="entry name" value="G6P_isomerase"/>
    <property type="match status" value="1"/>
</dbReference>
<dbReference type="InterPro" id="IPR001672">
    <property type="entry name" value="G6P_Isomerase"/>
</dbReference>
<dbReference type="InterPro" id="IPR023096">
    <property type="entry name" value="G6P_Isomerase_C"/>
</dbReference>
<dbReference type="InterPro" id="IPR018189">
    <property type="entry name" value="Phosphoglucose_isomerase_CS"/>
</dbReference>
<dbReference type="InterPro" id="IPR046348">
    <property type="entry name" value="SIS_dom_sf"/>
</dbReference>
<dbReference type="InterPro" id="IPR035476">
    <property type="entry name" value="SIS_PGI_1"/>
</dbReference>
<dbReference type="InterPro" id="IPR035482">
    <property type="entry name" value="SIS_PGI_2"/>
</dbReference>
<dbReference type="NCBIfam" id="NF010695">
    <property type="entry name" value="PRK14095.1"/>
    <property type="match status" value="1"/>
</dbReference>
<dbReference type="PANTHER" id="PTHR11469">
    <property type="entry name" value="GLUCOSE-6-PHOSPHATE ISOMERASE"/>
    <property type="match status" value="1"/>
</dbReference>
<dbReference type="PANTHER" id="PTHR11469:SF1">
    <property type="entry name" value="GLUCOSE-6-PHOSPHATE ISOMERASE"/>
    <property type="match status" value="1"/>
</dbReference>
<dbReference type="Pfam" id="PF00342">
    <property type="entry name" value="PGI"/>
    <property type="match status" value="1"/>
</dbReference>
<dbReference type="PRINTS" id="PR00662">
    <property type="entry name" value="G6PISOMERASE"/>
</dbReference>
<dbReference type="SUPFAM" id="SSF53697">
    <property type="entry name" value="SIS domain"/>
    <property type="match status" value="1"/>
</dbReference>
<dbReference type="PROSITE" id="PS00765">
    <property type="entry name" value="P_GLUCOSE_ISOMERASE_1"/>
    <property type="match status" value="1"/>
</dbReference>
<dbReference type="PROSITE" id="PS00174">
    <property type="entry name" value="P_GLUCOSE_ISOMERASE_2"/>
    <property type="match status" value="1"/>
</dbReference>
<dbReference type="PROSITE" id="PS51463">
    <property type="entry name" value="P_GLUCOSE_ISOMERASE_3"/>
    <property type="match status" value="1"/>
</dbReference>
<proteinExistence type="inferred from homology"/>